<reference key="1">
    <citation type="journal article" date="2000" name="Nature">
        <title>Sequence and analysis of chromosome 5 of the plant Arabidopsis thaliana.</title>
        <authorList>
            <person name="Tabata S."/>
            <person name="Kaneko T."/>
            <person name="Nakamura Y."/>
            <person name="Kotani H."/>
            <person name="Kato T."/>
            <person name="Asamizu E."/>
            <person name="Miyajima N."/>
            <person name="Sasamoto S."/>
            <person name="Kimura T."/>
            <person name="Hosouchi T."/>
            <person name="Kawashima K."/>
            <person name="Kohara M."/>
            <person name="Matsumoto M."/>
            <person name="Matsuno A."/>
            <person name="Muraki A."/>
            <person name="Nakayama S."/>
            <person name="Nakazaki N."/>
            <person name="Naruo K."/>
            <person name="Okumura S."/>
            <person name="Shinpo S."/>
            <person name="Takeuchi C."/>
            <person name="Wada T."/>
            <person name="Watanabe A."/>
            <person name="Yamada M."/>
            <person name="Yasuda M."/>
            <person name="Sato S."/>
            <person name="de la Bastide M."/>
            <person name="Huang E."/>
            <person name="Spiegel L."/>
            <person name="Gnoj L."/>
            <person name="O'Shaughnessy A."/>
            <person name="Preston R."/>
            <person name="Habermann K."/>
            <person name="Murray J."/>
            <person name="Johnson D."/>
            <person name="Rohlfing T."/>
            <person name="Nelson J."/>
            <person name="Stoneking T."/>
            <person name="Pepin K."/>
            <person name="Spieth J."/>
            <person name="Sekhon M."/>
            <person name="Armstrong J."/>
            <person name="Becker M."/>
            <person name="Belter E."/>
            <person name="Cordum H."/>
            <person name="Cordes M."/>
            <person name="Courtney L."/>
            <person name="Courtney W."/>
            <person name="Dante M."/>
            <person name="Du H."/>
            <person name="Edwards J."/>
            <person name="Fryman J."/>
            <person name="Haakensen B."/>
            <person name="Lamar E."/>
            <person name="Latreille P."/>
            <person name="Leonard S."/>
            <person name="Meyer R."/>
            <person name="Mulvaney E."/>
            <person name="Ozersky P."/>
            <person name="Riley A."/>
            <person name="Strowmatt C."/>
            <person name="Wagner-McPherson C."/>
            <person name="Wollam A."/>
            <person name="Yoakum M."/>
            <person name="Bell M."/>
            <person name="Dedhia N."/>
            <person name="Parnell L."/>
            <person name="Shah R."/>
            <person name="Rodriguez M."/>
            <person name="Hoon See L."/>
            <person name="Vil D."/>
            <person name="Baker J."/>
            <person name="Kirchoff K."/>
            <person name="Toth K."/>
            <person name="King L."/>
            <person name="Bahret A."/>
            <person name="Miller B."/>
            <person name="Marra M.A."/>
            <person name="Martienssen R."/>
            <person name="McCombie W.R."/>
            <person name="Wilson R.K."/>
            <person name="Murphy G."/>
            <person name="Bancroft I."/>
            <person name="Volckaert G."/>
            <person name="Wambutt R."/>
            <person name="Duesterhoeft A."/>
            <person name="Stiekema W."/>
            <person name="Pohl T."/>
            <person name="Entian K.-D."/>
            <person name="Terryn N."/>
            <person name="Hartley N."/>
            <person name="Bent E."/>
            <person name="Johnson S."/>
            <person name="Langham S.-A."/>
            <person name="McCullagh B."/>
            <person name="Robben J."/>
            <person name="Grymonprez B."/>
            <person name="Zimmermann W."/>
            <person name="Ramsperger U."/>
            <person name="Wedler H."/>
            <person name="Balke K."/>
            <person name="Wedler E."/>
            <person name="Peters S."/>
            <person name="van Staveren M."/>
            <person name="Dirkse W."/>
            <person name="Mooijman P."/>
            <person name="Klein Lankhorst R."/>
            <person name="Weitzenegger T."/>
            <person name="Bothe G."/>
            <person name="Rose M."/>
            <person name="Hauf J."/>
            <person name="Berneiser S."/>
            <person name="Hempel S."/>
            <person name="Feldpausch M."/>
            <person name="Lamberth S."/>
            <person name="Villarroel R."/>
            <person name="Gielen J."/>
            <person name="Ardiles W."/>
            <person name="Bents O."/>
            <person name="Lemcke K."/>
            <person name="Kolesov G."/>
            <person name="Mayer K.F.X."/>
            <person name="Rudd S."/>
            <person name="Schoof H."/>
            <person name="Schueller C."/>
            <person name="Zaccaria P."/>
            <person name="Mewes H.-W."/>
            <person name="Bevan M."/>
            <person name="Fransz P.F."/>
        </authorList>
    </citation>
    <scope>NUCLEOTIDE SEQUENCE [LARGE SCALE GENOMIC DNA]</scope>
    <source>
        <strain>cv. Columbia</strain>
    </source>
</reference>
<reference key="2">
    <citation type="journal article" date="2017" name="Plant J.">
        <title>Araport11: a complete reannotation of the Arabidopsis thaliana reference genome.</title>
        <authorList>
            <person name="Cheng C.Y."/>
            <person name="Krishnakumar V."/>
            <person name="Chan A.P."/>
            <person name="Thibaud-Nissen F."/>
            <person name="Schobel S."/>
            <person name="Town C.D."/>
        </authorList>
    </citation>
    <scope>GENOME REANNOTATION</scope>
    <source>
        <strain>cv. Columbia</strain>
    </source>
</reference>
<reference key="3">
    <citation type="journal article" date="2003" name="Science">
        <title>Empirical analysis of transcriptional activity in the Arabidopsis genome.</title>
        <authorList>
            <person name="Yamada K."/>
            <person name="Lim J."/>
            <person name="Dale J.M."/>
            <person name="Chen H."/>
            <person name="Shinn P."/>
            <person name="Palm C.J."/>
            <person name="Southwick A.M."/>
            <person name="Wu H.C."/>
            <person name="Kim C.J."/>
            <person name="Nguyen M."/>
            <person name="Pham P.K."/>
            <person name="Cheuk R.F."/>
            <person name="Karlin-Newmann G."/>
            <person name="Liu S.X."/>
            <person name="Lam B."/>
            <person name="Sakano H."/>
            <person name="Wu T."/>
            <person name="Yu G."/>
            <person name="Miranda M."/>
            <person name="Quach H.L."/>
            <person name="Tripp M."/>
            <person name="Chang C.H."/>
            <person name="Lee J.M."/>
            <person name="Toriumi M.J."/>
            <person name="Chan M.M."/>
            <person name="Tang C.C."/>
            <person name="Onodera C.S."/>
            <person name="Deng J.M."/>
            <person name="Akiyama K."/>
            <person name="Ansari Y."/>
            <person name="Arakawa T."/>
            <person name="Banh J."/>
            <person name="Banno F."/>
            <person name="Bowser L."/>
            <person name="Brooks S.Y."/>
            <person name="Carninci P."/>
            <person name="Chao Q."/>
            <person name="Choy N."/>
            <person name="Enju A."/>
            <person name="Goldsmith A.D."/>
            <person name="Gurjal M."/>
            <person name="Hansen N.F."/>
            <person name="Hayashizaki Y."/>
            <person name="Johnson-Hopson C."/>
            <person name="Hsuan V.W."/>
            <person name="Iida K."/>
            <person name="Karnes M."/>
            <person name="Khan S."/>
            <person name="Koesema E."/>
            <person name="Ishida J."/>
            <person name="Jiang P.X."/>
            <person name="Jones T."/>
            <person name="Kawai J."/>
            <person name="Kamiya A."/>
            <person name="Meyers C."/>
            <person name="Nakajima M."/>
            <person name="Narusaka M."/>
            <person name="Seki M."/>
            <person name="Sakurai T."/>
            <person name="Satou M."/>
            <person name="Tamse R."/>
            <person name="Vaysberg M."/>
            <person name="Wallender E.K."/>
            <person name="Wong C."/>
            <person name="Yamamura Y."/>
            <person name="Yuan S."/>
            <person name="Shinozaki K."/>
            <person name="Davis R.W."/>
            <person name="Theologis A."/>
            <person name="Ecker J.R."/>
        </authorList>
    </citation>
    <scope>NUCLEOTIDE SEQUENCE [LARGE SCALE MRNA]</scope>
    <source>
        <strain>cv. Columbia</strain>
    </source>
</reference>
<reference key="4">
    <citation type="journal article" date="2010" name="BMC Genomics">
        <title>Genome-wide cloning and sequence analysis of leucine-rich repeat receptor-like protein kinase genes in Arabidopsis thaliana.</title>
        <authorList>
            <person name="Gou X."/>
            <person name="He K."/>
            <person name="Yang H."/>
            <person name="Yuan T."/>
            <person name="Lin H."/>
            <person name="Clouse S.D."/>
            <person name="Li J."/>
        </authorList>
    </citation>
    <scope>NUCLEOTIDE SEQUENCE [LARGE SCALE MRNA]</scope>
    <source>
        <strain>cv. Columbia</strain>
    </source>
</reference>
<gene>
    <name type="ordered locus">At5g10290</name>
    <name type="ORF">F18D22.60</name>
</gene>
<dbReference type="EC" id="2.7.11.1"/>
<dbReference type="EMBL" id="AL360334">
    <property type="protein sequence ID" value="CAB96685.1"/>
    <property type="status" value="ALT_SEQ"/>
    <property type="molecule type" value="Genomic_DNA"/>
</dbReference>
<dbReference type="EMBL" id="CP002688">
    <property type="protein sequence ID" value="AED91517.1"/>
    <property type="molecule type" value="Genomic_DNA"/>
</dbReference>
<dbReference type="EMBL" id="CP002688">
    <property type="protein sequence ID" value="ANM68908.1"/>
    <property type="molecule type" value="Genomic_DNA"/>
</dbReference>
<dbReference type="EMBL" id="AY093029">
    <property type="protein sequence ID" value="AAM13028.1"/>
    <property type="molecule type" value="mRNA"/>
</dbReference>
<dbReference type="EMBL" id="FJ708775">
    <property type="protein sequence ID" value="ACN59366.1"/>
    <property type="molecule type" value="mRNA"/>
</dbReference>
<dbReference type="PIR" id="T50817">
    <property type="entry name" value="T50817"/>
</dbReference>
<dbReference type="RefSeq" id="NP_001330624.1">
    <property type="nucleotide sequence ID" value="NM_001343098.1"/>
</dbReference>
<dbReference type="RefSeq" id="NP_196591.2">
    <property type="nucleotide sequence ID" value="NM_121067.4"/>
</dbReference>
<dbReference type="SMR" id="C0LGT1"/>
<dbReference type="BioGRID" id="16171">
    <property type="interactions" value="66"/>
</dbReference>
<dbReference type="FunCoup" id="C0LGT1">
    <property type="interactions" value="619"/>
</dbReference>
<dbReference type="IntAct" id="C0LGT1">
    <property type="interactions" value="56"/>
</dbReference>
<dbReference type="STRING" id="3702.C0LGT1"/>
<dbReference type="GlyGen" id="C0LGT1">
    <property type="glycosylation" value="4 sites"/>
</dbReference>
<dbReference type="iPTMnet" id="C0LGT1"/>
<dbReference type="SwissPalm" id="C0LGT1"/>
<dbReference type="PaxDb" id="3702-AT5G10290.1"/>
<dbReference type="ProteomicsDB" id="243129"/>
<dbReference type="EnsemblPlants" id="AT5G10290.1">
    <property type="protein sequence ID" value="AT5G10290.1"/>
    <property type="gene ID" value="AT5G10290"/>
</dbReference>
<dbReference type="EnsemblPlants" id="AT5G10290.2">
    <property type="protein sequence ID" value="AT5G10290.2"/>
    <property type="gene ID" value="AT5G10290"/>
</dbReference>
<dbReference type="GeneID" id="830893"/>
<dbReference type="Gramene" id="AT5G10290.1">
    <property type="protein sequence ID" value="AT5G10290.1"/>
    <property type="gene ID" value="AT5G10290"/>
</dbReference>
<dbReference type="Gramene" id="AT5G10290.2">
    <property type="protein sequence ID" value="AT5G10290.2"/>
    <property type="gene ID" value="AT5G10290"/>
</dbReference>
<dbReference type="KEGG" id="ath:AT5G10290"/>
<dbReference type="Araport" id="AT5G10290"/>
<dbReference type="TAIR" id="AT5G10290"/>
<dbReference type="eggNOG" id="ENOG502QPJ2">
    <property type="taxonomic scope" value="Eukaryota"/>
</dbReference>
<dbReference type="HOGENOM" id="CLU_000288_92_6_1"/>
<dbReference type="InParanoid" id="C0LGT1"/>
<dbReference type="OMA" id="WRGRHKG"/>
<dbReference type="PhylomeDB" id="C0LGT1"/>
<dbReference type="PRO" id="PR:C0LGT1"/>
<dbReference type="Proteomes" id="UP000006548">
    <property type="component" value="Chromosome 5"/>
</dbReference>
<dbReference type="ExpressionAtlas" id="C0LGT1">
    <property type="expression patterns" value="baseline and differential"/>
</dbReference>
<dbReference type="GO" id="GO:0005886">
    <property type="term" value="C:plasma membrane"/>
    <property type="evidence" value="ECO:0007005"/>
    <property type="project" value="TAIR"/>
</dbReference>
<dbReference type="GO" id="GO:0005524">
    <property type="term" value="F:ATP binding"/>
    <property type="evidence" value="ECO:0007669"/>
    <property type="project" value="UniProtKB-KW"/>
</dbReference>
<dbReference type="GO" id="GO:0042802">
    <property type="term" value="F:identical protein binding"/>
    <property type="evidence" value="ECO:0000353"/>
    <property type="project" value="IntAct"/>
</dbReference>
<dbReference type="GO" id="GO:0106310">
    <property type="term" value="F:protein serine kinase activity"/>
    <property type="evidence" value="ECO:0007669"/>
    <property type="project" value="RHEA"/>
</dbReference>
<dbReference type="GO" id="GO:0004674">
    <property type="term" value="F:protein serine/threonine kinase activity"/>
    <property type="evidence" value="ECO:0007669"/>
    <property type="project" value="UniProtKB-KW"/>
</dbReference>
<dbReference type="FunFam" id="3.80.10.10:FF:000150">
    <property type="entry name" value="Putative LRR receptor-like serine/threonine-protein kinase"/>
    <property type="match status" value="1"/>
</dbReference>
<dbReference type="FunFam" id="3.30.200.20:FF:000015">
    <property type="entry name" value="Somatic embryogenesis receptor kinase 1"/>
    <property type="match status" value="1"/>
</dbReference>
<dbReference type="FunFam" id="1.10.510.10:FF:000016">
    <property type="entry name" value="Somatic embryogenesis receptor-like kinase 1"/>
    <property type="match status" value="1"/>
</dbReference>
<dbReference type="Gene3D" id="3.30.200.20">
    <property type="entry name" value="Phosphorylase Kinase, domain 1"/>
    <property type="match status" value="1"/>
</dbReference>
<dbReference type="Gene3D" id="3.80.10.10">
    <property type="entry name" value="Ribonuclease Inhibitor"/>
    <property type="match status" value="1"/>
</dbReference>
<dbReference type="Gene3D" id="1.10.510.10">
    <property type="entry name" value="Transferase(Phosphotransferase) domain 1"/>
    <property type="match status" value="1"/>
</dbReference>
<dbReference type="InterPro" id="IPR011009">
    <property type="entry name" value="Kinase-like_dom_sf"/>
</dbReference>
<dbReference type="InterPro" id="IPR001611">
    <property type="entry name" value="Leu-rich_rpt"/>
</dbReference>
<dbReference type="InterPro" id="IPR025875">
    <property type="entry name" value="Leu-rich_rpt_4"/>
</dbReference>
<dbReference type="InterPro" id="IPR003591">
    <property type="entry name" value="Leu-rich_rpt_typical-subtyp"/>
</dbReference>
<dbReference type="InterPro" id="IPR032675">
    <property type="entry name" value="LRR_dom_sf"/>
</dbReference>
<dbReference type="InterPro" id="IPR013210">
    <property type="entry name" value="LRR_N_plant-typ"/>
</dbReference>
<dbReference type="InterPro" id="IPR050647">
    <property type="entry name" value="Plant_LRR-RLKs"/>
</dbReference>
<dbReference type="InterPro" id="IPR000719">
    <property type="entry name" value="Prot_kinase_dom"/>
</dbReference>
<dbReference type="InterPro" id="IPR017441">
    <property type="entry name" value="Protein_kinase_ATP_BS"/>
</dbReference>
<dbReference type="InterPro" id="IPR001245">
    <property type="entry name" value="Ser-Thr/Tyr_kinase_cat_dom"/>
</dbReference>
<dbReference type="InterPro" id="IPR008271">
    <property type="entry name" value="Ser/Thr_kinase_AS"/>
</dbReference>
<dbReference type="PANTHER" id="PTHR48056">
    <property type="entry name" value="LRR RECEPTOR-LIKE SERINE/THREONINE-PROTEIN KINASE-RELATED"/>
    <property type="match status" value="1"/>
</dbReference>
<dbReference type="PANTHER" id="PTHR48056:SF81">
    <property type="entry name" value="RECEPTOR PROTEIN-TYROSINE KINASE CEPR1"/>
    <property type="match status" value="1"/>
</dbReference>
<dbReference type="Pfam" id="PF00560">
    <property type="entry name" value="LRR_1"/>
    <property type="match status" value="1"/>
</dbReference>
<dbReference type="Pfam" id="PF12799">
    <property type="entry name" value="LRR_4"/>
    <property type="match status" value="1"/>
</dbReference>
<dbReference type="Pfam" id="PF08263">
    <property type="entry name" value="LRRNT_2"/>
    <property type="match status" value="1"/>
</dbReference>
<dbReference type="Pfam" id="PF07714">
    <property type="entry name" value="PK_Tyr_Ser-Thr"/>
    <property type="match status" value="1"/>
</dbReference>
<dbReference type="SMART" id="SM00369">
    <property type="entry name" value="LRR_TYP"/>
    <property type="match status" value="4"/>
</dbReference>
<dbReference type="SMART" id="SM00220">
    <property type="entry name" value="S_TKc"/>
    <property type="match status" value="1"/>
</dbReference>
<dbReference type="SUPFAM" id="SSF52058">
    <property type="entry name" value="L domain-like"/>
    <property type="match status" value="1"/>
</dbReference>
<dbReference type="SUPFAM" id="SSF56112">
    <property type="entry name" value="Protein kinase-like (PK-like)"/>
    <property type="match status" value="1"/>
</dbReference>
<dbReference type="PROSITE" id="PS00107">
    <property type="entry name" value="PROTEIN_KINASE_ATP"/>
    <property type="match status" value="1"/>
</dbReference>
<dbReference type="PROSITE" id="PS50011">
    <property type="entry name" value="PROTEIN_KINASE_DOM"/>
    <property type="match status" value="1"/>
</dbReference>
<dbReference type="PROSITE" id="PS00108">
    <property type="entry name" value="PROTEIN_KINASE_ST"/>
    <property type="match status" value="1"/>
</dbReference>
<proteinExistence type="evidence at protein level"/>
<sequence length="613" mass="68659">MRMFSLQKMAMAFTLLFFACLCSFVSPDAQGDALFALRISLRALPNQLSDWNQNQVNPCTWSQVICDDKNFVTSLTLSDMNFSGTLSSRVGILENLKTLTLKGNGITGEIPEDFGNLTSLTSLDLEDNQLTGRIPSTIGNLKKLQFLTLSRNKLNGTIPESLTGLPNLLNLLLDSNSLSGQIPQSLFEIPKYNFTSNNLNCGGRQPHPCVSAVAHSGDSSKPKTGIIAGVVAGVTVVLFGILLFLFCKDRHKGYRRDVFVDVAGEVDRRIAFGQLKRFAWRELQLATDNFSEKNVLGQGGFGKVYKGVLPDNTKVAVKRLTDFESPGGDAAFQREVEMISVAVHRNLLRLIGFCTTQTERLLVYPFMQNLSLAHRLREIKAGDPVLDWETRKRIALGAARGFEYLHEHCNPKIIHRDVKAANVLLDEDFEAVVGDFGLAKLVDVRRTNVTTQVRGTMGHIAPEYLSTGKSSERTDVFGYGIMLLELVTGQRAIDFSRLEEEDDVLLLDHVKKLEREKRLGAIVDKNLDGEYIKEEVEMMIQVALLCTQGSPEDRPVMSEVVRMLEGEGLAERWEEWQNVEVTRRHEFERLQRRFDWGEDSMHNQDAIELSGGR</sequence>
<comment type="catalytic activity">
    <reaction>
        <text>L-seryl-[protein] + ATP = O-phospho-L-seryl-[protein] + ADP + H(+)</text>
        <dbReference type="Rhea" id="RHEA:17989"/>
        <dbReference type="Rhea" id="RHEA-COMP:9863"/>
        <dbReference type="Rhea" id="RHEA-COMP:11604"/>
        <dbReference type="ChEBI" id="CHEBI:15378"/>
        <dbReference type="ChEBI" id="CHEBI:29999"/>
        <dbReference type="ChEBI" id="CHEBI:30616"/>
        <dbReference type="ChEBI" id="CHEBI:83421"/>
        <dbReference type="ChEBI" id="CHEBI:456216"/>
        <dbReference type="EC" id="2.7.11.1"/>
    </reaction>
</comment>
<comment type="catalytic activity">
    <reaction>
        <text>L-threonyl-[protein] + ATP = O-phospho-L-threonyl-[protein] + ADP + H(+)</text>
        <dbReference type="Rhea" id="RHEA:46608"/>
        <dbReference type="Rhea" id="RHEA-COMP:11060"/>
        <dbReference type="Rhea" id="RHEA-COMP:11605"/>
        <dbReference type="ChEBI" id="CHEBI:15378"/>
        <dbReference type="ChEBI" id="CHEBI:30013"/>
        <dbReference type="ChEBI" id="CHEBI:30616"/>
        <dbReference type="ChEBI" id="CHEBI:61977"/>
        <dbReference type="ChEBI" id="CHEBI:456216"/>
        <dbReference type="EC" id="2.7.11.1"/>
    </reaction>
</comment>
<comment type="interaction">
    <interactant intactId="EBI-16954266">
        <id>C0LGT1</id>
    </interactant>
    <interactant intactId="EBI-20651385">
        <id>Q9SH71</id>
        <label>At1g64210</label>
    </interactant>
    <organismsDiffer>false</organismsDiffer>
    <experiments>2</experiments>
</comment>
<comment type="interaction">
    <interactant intactId="EBI-16954266">
        <id>C0LGT1</id>
    </interactant>
    <interactant intactId="EBI-16954266">
        <id>C0LGT1</id>
        <label>At5g10290</label>
    </interactant>
    <organismsDiffer>false</organismsDiffer>
    <experiments>2</experiments>
</comment>
<comment type="interaction">
    <interactant intactId="EBI-16954266">
        <id>C0LGT1</id>
    </interactant>
    <interactant intactId="EBI-20653325">
        <id>O65440-2</id>
        <label>BAM3</label>
    </interactant>
    <organismsDiffer>false</organismsDiffer>
    <experiments>2</experiments>
</comment>
<comment type="interaction">
    <interactant intactId="EBI-16954266">
        <id>C0LGT1</id>
    </interactant>
    <interactant intactId="EBI-16955556">
        <id>Q8GX94</id>
        <label>MQB2.1</label>
    </interactant>
    <organismsDiffer>false</organismsDiffer>
    <experiments>2</experiments>
</comment>
<comment type="subcellular location">
    <subcellularLocation>
        <location evidence="1">Cell membrane</location>
        <topology evidence="1">Single-pass type I membrane protein</topology>
    </subcellularLocation>
</comment>
<comment type="similarity">
    <text evidence="6">Belongs to the protein kinase superfamily. Ser/Thr protein kinase family.</text>
</comment>
<comment type="sequence caution" evidence="8">
    <conflict type="erroneous gene model prediction">
        <sequence resource="EMBL-CDS" id="CAB96685"/>
    </conflict>
</comment>
<organism>
    <name type="scientific">Arabidopsis thaliana</name>
    <name type="common">Mouse-ear cress</name>
    <dbReference type="NCBI Taxonomy" id="3702"/>
    <lineage>
        <taxon>Eukaryota</taxon>
        <taxon>Viridiplantae</taxon>
        <taxon>Streptophyta</taxon>
        <taxon>Embryophyta</taxon>
        <taxon>Tracheophyta</taxon>
        <taxon>Spermatophyta</taxon>
        <taxon>Magnoliopsida</taxon>
        <taxon>eudicotyledons</taxon>
        <taxon>Gunneridae</taxon>
        <taxon>Pentapetalae</taxon>
        <taxon>rosids</taxon>
        <taxon>malvids</taxon>
        <taxon>Brassicales</taxon>
        <taxon>Brassicaceae</taxon>
        <taxon>Camelineae</taxon>
        <taxon>Arabidopsis</taxon>
    </lineage>
</organism>
<name>Y5129_ARATH</name>
<keyword id="KW-0067">ATP-binding</keyword>
<keyword id="KW-1003">Cell membrane</keyword>
<keyword id="KW-0325">Glycoprotein</keyword>
<keyword id="KW-0418">Kinase</keyword>
<keyword id="KW-0433">Leucine-rich repeat</keyword>
<keyword id="KW-0472">Membrane</keyword>
<keyword id="KW-0547">Nucleotide-binding</keyword>
<keyword id="KW-0597">Phosphoprotein</keyword>
<keyword id="KW-0675">Receptor</keyword>
<keyword id="KW-1185">Reference proteome</keyword>
<keyword id="KW-0677">Repeat</keyword>
<keyword id="KW-0723">Serine/threonine-protein kinase</keyword>
<keyword id="KW-0732">Signal</keyword>
<keyword id="KW-0808">Transferase</keyword>
<keyword id="KW-0812">Transmembrane</keyword>
<keyword id="KW-1133">Transmembrane helix</keyword>
<evidence type="ECO:0000250" key="1"/>
<evidence type="ECO:0000250" key="2">
    <source>
        <dbReference type="UniProtKB" id="Q94AG2"/>
    </source>
</evidence>
<evidence type="ECO:0000250" key="3">
    <source>
        <dbReference type="UniProtKB" id="Q94F62"/>
    </source>
</evidence>
<evidence type="ECO:0000250" key="4">
    <source>
        <dbReference type="UniProtKB" id="Q9LSI9"/>
    </source>
</evidence>
<evidence type="ECO:0000255" key="5"/>
<evidence type="ECO:0000255" key="6">
    <source>
        <dbReference type="PROSITE-ProRule" id="PRU00159"/>
    </source>
</evidence>
<evidence type="ECO:0000255" key="7">
    <source>
        <dbReference type="PROSITE-ProRule" id="PRU10027"/>
    </source>
</evidence>
<evidence type="ECO:0000305" key="8"/>
<feature type="signal peptide" evidence="5">
    <location>
        <begin position="1"/>
        <end position="31"/>
    </location>
</feature>
<feature type="chain" id="PRO_0000387560" description="Probable LRR receptor-like serine/threonine-protein kinase At5g10290">
    <location>
        <begin position="32"/>
        <end position="613"/>
    </location>
</feature>
<feature type="topological domain" description="Extracellular" evidence="5">
    <location>
        <begin position="32"/>
        <end position="225"/>
    </location>
</feature>
<feature type="transmembrane region" description="Helical" evidence="5">
    <location>
        <begin position="226"/>
        <end position="246"/>
    </location>
</feature>
<feature type="topological domain" description="Cytoplasmic" evidence="5">
    <location>
        <begin position="247"/>
        <end position="613"/>
    </location>
</feature>
<feature type="repeat" description="LRR 1">
    <location>
        <begin position="95"/>
        <end position="117"/>
    </location>
</feature>
<feature type="repeat" description="LRR 2">
    <location>
        <begin position="119"/>
        <end position="141"/>
    </location>
</feature>
<feature type="repeat" description="LRR 3">
    <location>
        <begin position="143"/>
        <end position="166"/>
    </location>
</feature>
<feature type="repeat" description="LRR 4">
    <location>
        <begin position="167"/>
        <end position="189"/>
    </location>
</feature>
<feature type="domain" description="Protein kinase" evidence="6">
    <location>
        <begin position="290"/>
        <end position="569"/>
    </location>
</feature>
<feature type="active site" description="Proton acceptor" evidence="6 7">
    <location>
        <position position="417"/>
    </location>
</feature>
<feature type="binding site" evidence="6">
    <location>
        <begin position="296"/>
        <end position="304"/>
    </location>
    <ligand>
        <name>ATP</name>
        <dbReference type="ChEBI" id="CHEBI:30616"/>
    </ligand>
</feature>
<feature type="binding site" evidence="6">
    <location>
        <position position="318"/>
    </location>
    <ligand>
        <name>ATP</name>
        <dbReference type="ChEBI" id="CHEBI:30616"/>
    </ligand>
</feature>
<feature type="modified residue" description="Phosphothreonine" evidence="4">
    <location>
        <position position="287"/>
    </location>
</feature>
<feature type="modified residue" description="Phosphothreonine" evidence="3">
    <location>
        <position position="313"/>
    </location>
</feature>
<feature type="modified residue" description="Phosphoserine" evidence="2">
    <location>
        <position position="371"/>
    </location>
</feature>
<feature type="modified residue" description="Phosphothreonine" evidence="2">
    <location>
        <position position="390"/>
    </location>
</feature>
<feature type="modified residue" description="Phosphothreonine" evidence="3">
    <location>
        <position position="450"/>
    </location>
</feature>
<feature type="modified residue" description="Phosphothreonine" evidence="3">
    <location>
        <position position="451"/>
    </location>
</feature>
<feature type="modified residue" description="Phosphothreonine" evidence="3">
    <location>
        <position position="456"/>
    </location>
</feature>
<feature type="modified residue" description="Phosphotyrosine" evidence="2">
    <location>
        <position position="464"/>
    </location>
</feature>
<feature type="modified residue" description="Phosphoserine" evidence="2">
    <location>
        <position position="466"/>
    </location>
</feature>
<feature type="modified residue" description="Phosphothreonine" evidence="2">
    <location>
        <position position="467"/>
    </location>
</feature>
<feature type="modified residue" description="Phosphoserine" evidence="2">
    <location>
        <position position="471"/>
    </location>
</feature>
<feature type="modified residue" description="Phosphothreonine" evidence="2">
    <location>
        <position position="547"/>
    </location>
</feature>
<feature type="glycosylation site" description="N-linked (GlcNAc...) asparagine" evidence="5">
    <location>
        <position position="81"/>
    </location>
</feature>
<feature type="glycosylation site" description="N-linked (GlcNAc...) asparagine" evidence="5">
    <location>
        <position position="116"/>
    </location>
</feature>
<feature type="glycosylation site" description="N-linked (GlcNAc...) asparagine" evidence="5">
    <location>
        <position position="155"/>
    </location>
</feature>
<feature type="glycosylation site" description="N-linked (GlcNAc...) asparagine" evidence="5">
    <location>
        <position position="193"/>
    </location>
</feature>
<feature type="sequence conflict" description="In Ref. 3; AAM13028." evidence="8" ref="3">
    <original>E</original>
    <variation>G</variation>
    <location>
        <position position="537"/>
    </location>
</feature>
<accession>C0LGT1</accession>
<accession>Q8RWK7</accession>
<accession>Q9LFT7</accession>
<protein>
    <recommendedName>
        <fullName>Probable LRR receptor-like serine/threonine-protein kinase At5g10290</fullName>
        <ecNumber>2.7.11.1</ecNumber>
    </recommendedName>
</protein>